<name>DEOC_STAES</name>
<organism>
    <name type="scientific">Staphylococcus epidermidis (strain ATCC 12228 / FDA PCI 1200)</name>
    <dbReference type="NCBI Taxonomy" id="176280"/>
    <lineage>
        <taxon>Bacteria</taxon>
        <taxon>Bacillati</taxon>
        <taxon>Bacillota</taxon>
        <taxon>Bacilli</taxon>
        <taxon>Bacillales</taxon>
        <taxon>Staphylococcaceae</taxon>
        <taxon>Staphylococcus</taxon>
    </lineage>
</organism>
<accession>Q8CNH7</accession>
<accession>E2G6K8</accession>
<feature type="chain" id="PRO_0000057267" description="Deoxyribose-phosphate aldolase">
    <location>
        <begin position="1"/>
        <end position="220"/>
    </location>
</feature>
<feature type="active site" description="Proton donor/acceptor" evidence="1">
    <location>
        <position position="89"/>
    </location>
</feature>
<feature type="active site" description="Schiff-base intermediate with acetaldehyde" evidence="1">
    <location>
        <position position="151"/>
    </location>
</feature>
<feature type="active site" description="Proton donor/acceptor" evidence="1">
    <location>
        <position position="180"/>
    </location>
</feature>
<reference key="1">
    <citation type="submission" date="2010-05" db="EMBL/GenBank/DDBJ databases">
        <title>Molecular cloning and the structure analysis of 2-deoxy-D-ribose 5-phosphate aldolase homologs.</title>
        <authorList>
            <person name="Chen L."/>
            <person name="Yang L."/>
            <person name="Wu J."/>
        </authorList>
    </citation>
    <scope>NUCLEOTIDE SEQUENCE [GENOMIC DNA]</scope>
    <source>
        <strain>ATCC 12228 / FDA PCI 1200</strain>
    </source>
</reference>
<reference key="2">
    <citation type="journal article" date="2003" name="Mol. Microbiol.">
        <title>Genome-based analysis of virulence genes in a non-biofilm-forming Staphylococcus epidermidis strain (ATCC 12228).</title>
        <authorList>
            <person name="Zhang Y.-Q."/>
            <person name="Ren S.-X."/>
            <person name="Li H.-L."/>
            <person name="Wang Y.-X."/>
            <person name="Fu G."/>
            <person name="Yang J."/>
            <person name="Qin Z.-Q."/>
            <person name="Miao Y.-G."/>
            <person name="Wang W.-Y."/>
            <person name="Chen R.-S."/>
            <person name="Shen Y."/>
            <person name="Chen Z."/>
            <person name="Yuan Z.-H."/>
            <person name="Zhao G.-P."/>
            <person name="Qu D."/>
            <person name="Danchin A."/>
            <person name="Wen Y.-M."/>
        </authorList>
    </citation>
    <scope>NUCLEOTIDE SEQUENCE [LARGE SCALE GENOMIC DNA]</scope>
    <source>
        <strain>ATCC 12228 / FDA PCI 1200</strain>
    </source>
</reference>
<keyword id="KW-0963">Cytoplasm</keyword>
<keyword id="KW-0456">Lyase</keyword>
<keyword id="KW-0704">Schiff base</keyword>
<proteinExistence type="inferred from homology"/>
<dbReference type="EC" id="4.1.2.4" evidence="1"/>
<dbReference type="EMBL" id="HM235422">
    <property type="protein sequence ID" value="ADN43034.1"/>
    <property type="molecule type" value="Genomic_DNA"/>
</dbReference>
<dbReference type="EMBL" id="AE015929">
    <property type="protein sequence ID" value="AAO05335.1"/>
    <property type="molecule type" value="Genomic_DNA"/>
</dbReference>
<dbReference type="RefSeq" id="NP_765291.1">
    <property type="nucleotide sequence ID" value="NC_004461.1"/>
</dbReference>
<dbReference type="RefSeq" id="WP_002458726.1">
    <property type="nucleotide sequence ID" value="NZ_WBME01000041.1"/>
</dbReference>
<dbReference type="SMR" id="Q8CNH7"/>
<dbReference type="GeneID" id="50018165"/>
<dbReference type="KEGG" id="sep:SE_1736"/>
<dbReference type="PATRIC" id="fig|176280.10.peg.1696"/>
<dbReference type="eggNOG" id="COG0274">
    <property type="taxonomic scope" value="Bacteria"/>
</dbReference>
<dbReference type="HOGENOM" id="CLU_053595_0_2_9"/>
<dbReference type="OrthoDB" id="9778711at2"/>
<dbReference type="UniPathway" id="UPA00002">
    <property type="reaction ID" value="UER00468"/>
</dbReference>
<dbReference type="Proteomes" id="UP000001411">
    <property type="component" value="Chromosome"/>
</dbReference>
<dbReference type="GO" id="GO:0005737">
    <property type="term" value="C:cytoplasm"/>
    <property type="evidence" value="ECO:0007669"/>
    <property type="project" value="UniProtKB-SubCell"/>
</dbReference>
<dbReference type="GO" id="GO:0004139">
    <property type="term" value="F:deoxyribose-phosphate aldolase activity"/>
    <property type="evidence" value="ECO:0007669"/>
    <property type="project" value="UniProtKB-UniRule"/>
</dbReference>
<dbReference type="GO" id="GO:0006018">
    <property type="term" value="P:2-deoxyribose 1-phosphate catabolic process"/>
    <property type="evidence" value="ECO:0007669"/>
    <property type="project" value="UniProtKB-UniRule"/>
</dbReference>
<dbReference type="GO" id="GO:0016052">
    <property type="term" value="P:carbohydrate catabolic process"/>
    <property type="evidence" value="ECO:0007669"/>
    <property type="project" value="TreeGrafter"/>
</dbReference>
<dbReference type="GO" id="GO:0009264">
    <property type="term" value="P:deoxyribonucleotide catabolic process"/>
    <property type="evidence" value="ECO:0007669"/>
    <property type="project" value="InterPro"/>
</dbReference>
<dbReference type="CDD" id="cd00959">
    <property type="entry name" value="DeoC"/>
    <property type="match status" value="1"/>
</dbReference>
<dbReference type="FunFam" id="3.20.20.70:FF:000044">
    <property type="entry name" value="Deoxyribose-phosphate aldolase"/>
    <property type="match status" value="1"/>
</dbReference>
<dbReference type="Gene3D" id="3.20.20.70">
    <property type="entry name" value="Aldolase class I"/>
    <property type="match status" value="1"/>
</dbReference>
<dbReference type="HAMAP" id="MF_00114">
    <property type="entry name" value="DeoC_type1"/>
    <property type="match status" value="1"/>
</dbReference>
<dbReference type="InterPro" id="IPR013785">
    <property type="entry name" value="Aldolase_TIM"/>
</dbReference>
<dbReference type="InterPro" id="IPR011343">
    <property type="entry name" value="DeoC"/>
</dbReference>
<dbReference type="InterPro" id="IPR002915">
    <property type="entry name" value="DeoC/FbaB/LacD_aldolase"/>
</dbReference>
<dbReference type="InterPro" id="IPR028581">
    <property type="entry name" value="DeoC_typeI"/>
</dbReference>
<dbReference type="NCBIfam" id="TIGR00126">
    <property type="entry name" value="deoC"/>
    <property type="match status" value="1"/>
</dbReference>
<dbReference type="PANTHER" id="PTHR10889">
    <property type="entry name" value="DEOXYRIBOSE-PHOSPHATE ALDOLASE"/>
    <property type="match status" value="1"/>
</dbReference>
<dbReference type="PANTHER" id="PTHR10889:SF1">
    <property type="entry name" value="DEOXYRIBOSE-PHOSPHATE ALDOLASE"/>
    <property type="match status" value="1"/>
</dbReference>
<dbReference type="Pfam" id="PF01791">
    <property type="entry name" value="DeoC"/>
    <property type="match status" value="1"/>
</dbReference>
<dbReference type="PIRSF" id="PIRSF001357">
    <property type="entry name" value="DeoC"/>
    <property type="match status" value="1"/>
</dbReference>
<dbReference type="SMART" id="SM01133">
    <property type="entry name" value="DeoC"/>
    <property type="match status" value="1"/>
</dbReference>
<dbReference type="SUPFAM" id="SSF51569">
    <property type="entry name" value="Aldolase"/>
    <property type="match status" value="1"/>
</dbReference>
<protein>
    <recommendedName>
        <fullName evidence="1">Deoxyribose-phosphate aldolase</fullName>
        <shortName evidence="1">DERA</shortName>
        <ecNumber evidence="1">4.1.2.4</ecNumber>
    </recommendedName>
    <alternativeName>
        <fullName evidence="1">2-deoxy-D-ribose 5-phosphate aldolase</fullName>
    </alternativeName>
    <alternativeName>
        <fullName evidence="1">Phosphodeoxyriboaldolase</fullName>
        <shortName evidence="1">Deoxyriboaldolase</shortName>
    </alternativeName>
</protein>
<evidence type="ECO:0000255" key="1">
    <source>
        <dbReference type="HAMAP-Rule" id="MF_00114"/>
    </source>
</evidence>
<comment type="function">
    <text evidence="1">Catalyzes a reversible aldol reaction between acetaldehyde and D-glyceraldehyde 3-phosphate to generate 2-deoxy-D-ribose 5-phosphate.</text>
</comment>
<comment type="catalytic activity">
    <reaction evidence="1">
        <text>2-deoxy-D-ribose 5-phosphate = D-glyceraldehyde 3-phosphate + acetaldehyde</text>
        <dbReference type="Rhea" id="RHEA:12821"/>
        <dbReference type="ChEBI" id="CHEBI:15343"/>
        <dbReference type="ChEBI" id="CHEBI:59776"/>
        <dbReference type="ChEBI" id="CHEBI:62877"/>
        <dbReference type="EC" id="4.1.2.4"/>
    </reaction>
</comment>
<comment type="pathway">
    <text evidence="1">Carbohydrate degradation; 2-deoxy-D-ribose 1-phosphate degradation; D-glyceraldehyde 3-phosphate and acetaldehyde from 2-deoxy-alpha-D-ribose 1-phosphate: step 2/2.</text>
</comment>
<comment type="subcellular location">
    <subcellularLocation>
        <location evidence="1">Cytoplasm</location>
    </subcellularLocation>
</comment>
<comment type="similarity">
    <text evidence="1">Belongs to the DeoC/FbaB aldolase family. DeoC type 1 subfamily.</text>
</comment>
<sequence>MNKAKLIDHTLLKPDSTKEQIDTIINEAKAYQFKSVCVNPTHVQYASEQLKGTDVLVCTVIGFPLGATTTAVKSYETKDAINNGAQEIDMVINIGALKDGRFDEVQNDIEAVVQAANGKTVKVIIETVLLTEKEKIKACQLSEAAGAHFVKTSTGFAGGGATVEDVKLMKDTVGDRLEVKASGGVRNLEDFNNMIEAGATRIGASAGVQIIQGLESNTDY</sequence>
<gene>
    <name evidence="1" type="primary">deoC</name>
    <name type="ordered locus">SE_1736</name>
</gene>